<name>XNI_KLEP3</name>
<gene>
    <name evidence="1" type="primary">xni</name>
    <name evidence="1" type="synonym">ygdG</name>
    <name type="ordered locus">KPK_0970</name>
</gene>
<dbReference type="EC" id="3.1.-.-" evidence="1"/>
<dbReference type="EMBL" id="CP000964">
    <property type="protein sequence ID" value="ACI09758.1"/>
    <property type="molecule type" value="Genomic_DNA"/>
</dbReference>
<dbReference type="SMR" id="B5XUZ0"/>
<dbReference type="KEGG" id="kpe:KPK_0970"/>
<dbReference type="HOGENOM" id="CLU_004675_1_2_6"/>
<dbReference type="Proteomes" id="UP000001734">
    <property type="component" value="Chromosome"/>
</dbReference>
<dbReference type="GO" id="GO:0008409">
    <property type="term" value="F:5'-3' exonuclease activity"/>
    <property type="evidence" value="ECO:0007669"/>
    <property type="project" value="InterPro"/>
</dbReference>
<dbReference type="GO" id="GO:0017108">
    <property type="term" value="F:5'-flap endonuclease activity"/>
    <property type="evidence" value="ECO:0007669"/>
    <property type="project" value="UniProtKB-UniRule"/>
</dbReference>
<dbReference type="GO" id="GO:0003677">
    <property type="term" value="F:DNA binding"/>
    <property type="evidence" value="ECO:0007669"/>
    <property type="project" value="UniProtKB-UniRule"/>
</dbReference>
<dbReference type="GO" id="GO:0000287">
    <property type="term" value="F:magnesium ion binding"/>
    <property type="evidence" value="ECO:0007669"/>
    <property type="project" value="UniProtKB-UniRule"/>
</dbReference>
<dbReference type="GO" id="GO:0030955">
    <property type="term" value="F:potassium ion binding"/>
    <property type="evidence" value="ECO:0007669"/>
    <property type="project" value="UniProtKB-UniRule"/>
</dbReference>
<dbReference type="GO" id="GO:0033567">
    <property type="term" value="P:DNA replication, Okazaki fragment processing"/>
    <property type="evidence" value="ECO:0007669"/>
    <property type="project" value="UniProtKB-UniRule"/>
</dbReference>
<dbReference type="CDD" id="cd09898">
    <property type="entry name" value="H3TH_53EXO"/>
    <property type="match status" value="1"/>
</dbReference>
<dbReference type="CDD" id="cd09859">
    <property type="entry name" value="PIN_53EXO"/>
    <property type="match status" value="1"/>
</dbReference>
<dbReference type="FunFam" id="1.10.150.20:FF:000003">
    <property type="entry name" value="DNA polymerase I"/>
    <property type="match status" value="1"/>
</dbReference>
<dbReference type="FunFam" id="3.40.50.1010:FF:000011">
    <property type="entry name" value="Flap endonuclease Xni"/>
    <property type="match status" value="1"/>
</dbReference>
<dbReference type="Gene3D" id="1.10.150.20">
    <property type="entry name" value="5' to 3' exonuclease, C-terminal subdomain"/>
    <property type="match status" value="1"/>
</dbReference>
<dbReference type="Gene3D" id="3.40.50.1010">
    <property type="entry name" value="5'-nuclease"/>
    <property type="match status" value="1"/>
</dbReference>
<dbReference type="HAMAP" id="MF_01192">
    <property type="entry name" value="Xni"/>
    <property type="match status" value="1"/>
</dbReference>
<dbReference type="InterPro" id="IPR020046">
    <property type="entry name" value="5-3_exonucl_a-hlix_arch_N"/>
</dbReference>
<dbReference type="InterPro" id="IPR002421">
    <property type="entry name" value="5-3_exonuclease"/>
</dbReference>
<dbReference type="InterPro" id="IPR036279">
    <property type="entry name" value="5-3_exonuclease_C_sf"/>
</dbReference>
<dbReference type="InterPro" id="IPR020045">
    <property type="entry name" value="DNA_polI_H3TH"/>
</dbReference>
<dbReference type="InterPro" id="IPR038969">
    <property type="entry name" value="FEN"/>
</dbReference>
<dbReference type="InterPro" id="IPR008918">
    <property type="entry name" value="HhH2"/>
</dbReference>
<dbReference type="InterPro" id="IPR029060">
    <property type="entry name" value="PIN-like_dom_sf"/>
</dbReference>
<dbReference type="InterPro" id="IPR022895">
    <property type="entry name" value="Xni"/>
</dbReference>
<dbReference type="NCBIfam" id="NF007017">
    <property type="entry name" value="PRK09482.1"/>
    <property type="match status" value="1"/>
</dbReference>
<dbReference type="PANTHER" id="PTHR42646:SF2">
    <property type="entry name" value="5'-3' EXONUCLEASE FAMILY PROTEIN"/>
    <property type="match status" value="1"/>
</dbReference>
<dbReference type="PANTHER" id="PTHR42646">
    <property type="entry name" value="FLAP ENDONUCLEASE XNI"/>
    <property type="match status" value="1"/>
</dbReference>
<dbReference type="Pfam" id="PF01367">
    <property type="entry name" value="5_3_exonuc"/>
    <property type="match status" value="1"/>
</dbReference>
<dbReference type="Pfam" id="PF02739">
    <property type="entry name" value="5_3_exonuc_N"/>
    <property type="match status" value="1"/>
</dbReference>
<dbReference type="SMART" id="SM00475">
    <property type="entry name" value="53EXOc"/>
    <property type="match status" value="1"/>
</dbReference>
<dbReference type="SMART" id="SM00279">
    <property type="entry name" value="HhH2"/>
    <property type="match status" value="1"/>
</dbReference>
<dbReference type="SUPFAM" id="SSF47807">
    <property type="entry name" value="5' to 3' exonuclease, C-terminal subdomain"/>
    <property type="match status" value="1"/>
</dbReference>
<dbReference type="SUPFAM" id="SSF88723">
    <property type="entry name" value="PIN domain-like"/>
    <property type="match status" value="1"/>
</dbReference>
<feature type="chain" id="PRO_1000138385" description="Flap endonuclease Xni">
    <location>
        <begin position="1"/>
        <end position="251"/>
    </location>
</feature>
<feature type="domain" description="5'-3' exonuclease" evidence="1">
    <location>
        <begin position="160"/>
        <end position="249"/>
    </location>
</feature>
<feature type="region of interest" description="Interaction with DNA" evidence="1">
    <location>
        <begin position="184"/>
        <end position="189"/>
    </location>
</feature>
<feature type="binding site" evidence="1">
    <location>
        <position position="104"/>
    </location>
    <ligand>
        <name>Mg(2+)</name>
        <dbReference type="ChEBI" id="CHEBI:18420"/>
    </ligand>
</feature>
<feature type="binding site" evidence="1">
    <location>
        <position position="171"/>
    </location>
    <ligand>
        <name>K(+)</name>
        <dbReference type="ChEBI" id="CHEBI:29103"/>
    </ligand>
</feature>
<feature type="binding site" evidence="1">
    <location>
        <position position="172"/>
    </location>
    <ligand>
        <name>K(+)</name>
        <dbReference type="ChEBI" id="CHEBI:29103"/>
    </ligand>
</feature>
<feature type="binding site" evidence="1">
    <location>
        <position position="180"/>
    </location>
    <ligand>
        <name>K(+)</name>
        <dbReference type="ChEBI" id="CHEBI:29103"/>
    </ligand>
</feature>
<feature type="binding site" evidence="1">
    <location>
        <position position="182"/>
    </location>
    <ligand>
        <name>K(+)</name>
        <dbReference type="ChEBI" id="CHEBI:29103"/>
    </ligand>
</feature>
<feature type="binding site" evidence="1">
    <location>
        <position position="185"/>
    </location>
    <ligand>
        <name>K(+)</name>
        <dbReference type="ChEBI" id="CHEBI:29103"/>
    </ligand>
</feature>
<organism>
    <name type="scientific">Klebsiella pneumoniae (strain 342)</name>
    <dbReference type="NCBI Taxonomy" id="507522"/>
    <lineage>
        <taxon>Bacteria</taxon>
        <taxon>Pseudomonadati</taxon>
        <taxon>Pseudomonadota</taxon>
        <taxon>Gammaproteobacteria</taxon>
        <taxon>Enterobacterales</taxon>
        <taxon>Enterobacteriaceae</taxon>
        <taxon>Klebsiella/Raoultella group</taxon>
        <taxon>Klebsiella</taxon>
        <taxon>Klebsiella pneumoniae complex</taxon>
    </lineage>
</organism>
<comment type="function">
    <text evidence="1">Has flap endonuclease activity. During DNA replication, flap endonucleases cleave the 5'-overhanging flap structure that is generated by displacement synthesis when DNA polymerase encounters the 5'-end of a downstream Okazaki fragment.</text>
</comment>
<comment type="cofactor">
    <cofactor evidence="1">
        <name>Mg(2+)</name>
        <dbReference type="ChEBI" id="CHEBI:18420"/>
    </cofactor>
    <text evidence="1">Binds 2 Mg(2+) per subunit. Only one magnesium ion has a direct interaction with the protein, the other interactions are indirect.</text>
</comment>
<comment type="cofactor">
    <cofactor evidence="1">
        <name>K(+)</name>
        <dbReference type="ChEBI" id="CHEBI:29103"/>
    </cofactor>
    <text evidence="1">Binds 1 K(+) per subunit. The potassium ion strongly increases the affinity for DNA.</text>
</comment>
<comment type="similarity">
    <text evidence="1">Belongs to the Xni family.</text>
</comment>
<evidence type="ECO:0000255" key="1">
    <source>
        <dbReference type="HAMAP-Rule" id="MF_01192"/>
    </source>
</evidence>
<accession>B5XUZ0</accession>
<keyword id="KW-0238">DNA-binding</keyword>
<keyword id="KW-0255">Endonuclease</keyword>
<keyword id="KW-0378">Hydrolase</keyword>
<keyword id="KW-0460">Magnesium</keyword>
<keyword id="KW-0479">Metal-binding</keyword>
<keyword id="KW-0540">Nuclease</keyword>
<keyword id="KW-0630">Potassium</keyword>
<sequence>MAVHLLIVDALNLIRRIHAVQGSPCVDTCLHALEQLIVHSQPTHAVAVFDDEDRAHGWRHQRLPEYKAGRAPMPETLVAEMPALRAAFEQRGIRCWASPGSEADDLAATLAVKVAQAGHQATIVSTDKGYCQLLSPTIRIRDYFQKRWLDAPFIASEFGVTPEQLADYWGLAGISSSKVPGVAGIGPKSAAQLLNEFQDLEGLYARLAEVPEKWRKKLAAHQEMAFTCREVARLQTDLQLDGNLQQLRLTR</sequence>
<protein>
    <recommendedName>
        <fullName evidence="1">Flap endonuclease Xni</fullName>
        <shortName evidence="1">FEN</shortName>
        <ecNumber evidence="1">3.1.-.-</ecNumber>
    </recommendedName>
</protein>
<proteinExistence type="inferred from homology"/>
<reference key="1">
    <citation type="journal article" date="2008" name="PLoS Genet.">
        <title>Complete genome sequence of the N2-fixing broad host range endophyte Klebsiella pneumoniae 342 and virulence predictions verified in mice.</title>
        <authorList>
            <person name="Fouts D.E."/>
            <person name="Tyler H.L."/>
            <person name="DeBoy R.T."/>
            <person name="Daugherty S."/>
            <person name="Ren Q."/>
            <person name="Badger J.H."/>
            <person name="Durkin A.S."/>
            <person name="Huot H."/>
            <person name="Shrivastava S."/>
            <person name="Kothari S."/>
            <person name="Dodson R.J."/>
            <person name="Mohamoud Y."/>
            <person name="Khouri H."/>
            <person name="Roesch L.F.W."/>
            <person name="Krogfelt K.A."/>
            <person name="Struve C."/>
            <person name="Triplett E.W."/>
            <person name="Methe B.A."/>
        </authorList>
    </citation>
    <scope>NUCLEOTIDE SEQUENCE [LARGE SCALE GENOMIC DNA]</scope>
    <source>
        <strain>342</strain>
    </source>
</reference>